<gene>
    <name evidence="1" type="primary">cmk</name>
    <name type="ordered locus">Spea_2072</name>
</gene>
<sequence length="230" mass="25103">MSERAPVVTVDGPSGAGKGTISQLLAERLGYKLLDSGAIYRVLALAAIHHNVELDNEEALTLLAAHLDVQFVTGNESKGIKVVLEGEDVSITIRSQECSNAASKVAAFPRVREALLRRQRAFAEAPGLIADGRDMGTIVFPTTPAKLYLTASAEERAQRRYNQLQDKGFDVNIDQLLSEIKERDDRDMNRSVAPLVPAEDALIIDTTNINIEDVLDLALTHIHQKLQVPA</sequence>
<keyword id="KW-0067">ATP-binding</keyword>
<keyword id="KW-0963">Cytoplasm</keyword>
<keyword id="KW-0418">Kinase</keyword>
<keyword id="KW-0547">Nucleotide-binding</keyword>
<keyword id="KW-1185">Reference proteome</keyword>
<keyword id="KW-0808">Transferase</keyword>
<organism>
    <name type="scientific">Shewanella pealeana (strain ATCC 700345 / ANG-SQ1)</name>
    <dbReference type="NCBI Taxonomy" id="398579"/>
    <lineage>
        <taxon>Bacteria</taxon>
        <taxon>Pseudomonadati</taxon>
        <taxon>Pseudomonadota</taxon>
        <taxon>Gammaproteobacteria</taxon>
        <taxon>Alteromonadales</taxon>
        <taxon>Shewanellaceae</taxon>
        <taxon>Shewanella</taxon>
    </lineage>
</organism>
<evidence type="ECO:0000255" key="1">
    <source>
        <dbReference type="HAMAP-Rule" id="MF_00238"/>
    </source>
</evidence>
<feature type="chain" id="PRO_1000078351" description="Cytidylate kinase">
    <location>
        <begin position="1"/>
        <end position="230"/>
    </location>
</feature>
<feature type="binding site" evidence="1">
    <location>
        <begin position="12"/>
        <end position="20"/>
    </location>
    <ligand>
        <name>ATP</name>
        <dbReference type="ChEBI" id="CHEBI:30616"/>
    </ligand>
</feature>
<dbReference type="EC" id="2.7.4.25" evidence="1"/>
<dbReference type="EMBL" id="CP000851">
    <property type="protein sequence ID" value="ABV87392.1"/>
    <property type="molecule type" value="Genomic_DNA"/>
</dbReference>
<dbReference type="RefSeq" id="WP_012155308.1">
    <property type="nucleotide sequence ID" value="NC_009901.1"/>
</dbReference>
<dbReference type="SMR" id="A8H4A5"/>
<dbReference type="STRING" id="398579.Spea_2072"/>
<dbReference type="KEGG" id="spl:Spea_2072"/>
<dbReference type="eggNOG" id="COG0283">
    <property type="taxonomic scope" value="Bacteria"/>
</dbReference>
<dbReference type="HOGENOM" id="CLU_079959_2_0_6"/>
<dbReference type="OrthoDB" id="9807434at2"/>
<dbReference type="Proteomes" id="UP000002608">
    <property type="component" value="Chromosome"/>
</dbReference>
<dbReference type="GO" id="GO:0005829">
    <property type="term" value="C:cytosol"/>
    <property type="evidence" value="ECO:0007669"/>
    <property type="project" value="TreeGrafter"/>
</dbReference>
<dbReference type="GO" id="GO:0005524">
    <property type="term" value="F:ATP binding"/>
    <property type="evidence" value="ECO:0007669"/>
    <property type="project" value="UniProtKB-UniRule"/>
</dbReference>
<dbReference type="GO" id="GO:0036430">
    <property type="term" value="F:CMP kinase activity"/>
    <property type="evidence" value="ECO:0007669"/>
    <property type="project" value="RHEA"/>
</dbReference>
<dbReference type="GO" id="GO:0036431">
    <property type="term" value="F:dCMP kinase activity"/>
    <property type="evidence" value="ECO:0007669"/>
    <property type="project" value="RHEA"/>
</dbReference>
<dbReference type="GO" id="GO:0015949">
    <property type="term" value="P:nucleobase-containing small molecule interconversion"/>
    <property type="evidence" value="ECO:0007669"/>
    <property type="project" value="TreeGrafter"/>
</dbReference>
<dbReference type="GO" id="GO:0006220">
    <property type="term" value="P:pyrimidine nucleotide metabolic process"/>
    <property type="evidence" value="ECO:0007669"/>
    <property type="project" value="UniProtKB-UniRule"/>
</dbReference>
<dbReference type="CDD" id="cd02020">
    <property type="entry name" value="CMPK"/>
    <property type="match status" value="1"/>
</dbReference>
<dbReference type="FunFam" id="3.40.50.300:FF:000262">
    <property type="entry name" value="Cytidylate kinase"/>
    <property type="match status" value="1"/>
</dbReference>
<dbReference type="Gene3D" id="3.40.50.300">
    <property type="entry name" value="P-loop containing nucleotide triphosphate hydrolases"/>
    <property type="match status" value="1"/>
</dbReference>
<dbReference type="HAMAP" id="MF_00238">
    <property type="entry name" value="Cytidyl_kinase_type1"/>
    <property type="match status" value="1"/>
</dbReference>
<dbReference type="InterPro" id="IPR003136">
    <property type="entry name" value="Cytidylate_kin"/>
</dbReference>
<dbReference type="InterPro" id="IPR011994">
    <property type="entry name" value="Cytidylate_kinase_dom"/>
</dbReference>
<dbReference type="InterPro" id="IPR027417">
    <property type="entry name" value="P-loop_NTPase"/>
</dbReference>
<dbReference type="NCBIfam" id="TIGR00017">
    <property type="entry name" value="cmk"/>
    <property type="match status" value="1"/>
</dbReference>
<dbReference type="PANTHER" id="PTHR21299:SF2">
    <property type="entry name" value="CYTIDYLATE KINASE"/>
    <property type="match status" value="1"/>
</dbReference>
<dbReference type="PANTHER" id="PTHR21299">
    <property type="entry name" value="CYTIDYLATE KINASE/PANTOATE-BETA-ALANINE LIGASE"/>
    <property type="match status" value="1"/>
</dbReference>
<dbReference type="Pfam" id="PF02224">
    <property type="entry name" value="Cytidylate_kin"/>
    <property type="match status" value="1"/>
</dbReference>
<dbReference type="SUPFAM" id="SSF52540">
    <property type="entry name" value="P-loop containing nucleoside triphosphate hydrolases"/>
    <property type="match status" value="1"/>
</dbReference>
<proteinExistence type="inferred from homology"/>
<accession>A8H4A5</accession>
<protein>
    <recommendedName>
        <fullName evidence="1">Cytidylate kinase</fullName>
        <shortName evidence="1">CK</shortName>
        <ecNumber evidence="1">2.7.4.25</ecNumber>
    </recommendedName>
    <alternativeName>
        <fullName evidence="1">Cytidine monophosphate kinase</fullName>
        <shortName evidence="1">CMP kinase</shortName>
    </alternativeName>
</protein>
<name>KCY_SHEPA</name>
<reference key="1">
    <citation type="submission" date="2007-10" db="EMBL/GenBank/DDBJ databases">
        <title>Complete sequence of Shewanella pealeana ATCC 700345.</title>
        <authorList>
            <consortium name="US DOE Joint Genome Institute"/>
            <person name="Copeland A."/>
            <person name="Lucas S."/>
            <person name="Lapidus A."/>
            <person name="Barry K."/>
            <person name="Glavina del Rio T."/>
            <person name="Dalin E."/>
            <person name="Tice H."/>
            <person name="Pitluck S."/>
            <person name="Chertkov O."/>
            <person name="Brettin T."/>
            <person name="Bruce D."/>
            <person name="Detter J.C."/>
            <person name="Han C."/>
            <person name="Schmutz J."/>
            <person name="Larimer F."/>
            <person name="Land M."/>
            <person name="Hauser L."/>
            <person name="Kyrpides N."/>
            <person name="Kim E."/>
            <person name="Zhao J.-S.Z."/>
            <person name="Manno D."/>
            <person name="Hawari J."/>
            <person name="Richardson P."/>
        </authorList>
    </citation>
    <scope>NUCLEOTIDE SEQUENCE [LARGE SCALE GENOMIC DNA]</scope>
    <source>
        <strain>ATCC 700345 / ANG-SQ1</strain>
    </source>
</reference>
<comment type="catalytic activity">
    <reaction evidence="1">
        <text>CMP + ATP = CDP + ADP</text>
        <dbReference type="Rhea" id="RHEA:11600"/>
        <dbReference type="ChEBI" id="CHEBI:30616"/>
        <dbReference type="ChEBI" id="CHEBI:58069"/>
        <dbReference type="ChEBI" id="CHEBI:60377"/>
        <dbReference type="ChEBI" id="CHEBI:456216"/>
        <dbReference type="EC" id="2.7.4.25"/>
    </reaction>
</comment>
<comment type="catalytic activity">
    <reaction evidence="1">
        <text>dCMP + ATP = dCDP + ADP</text>
        <dbReference type="Rhea" id="RHEA:25094"/>
        <dbReference type="ChEBI" id="CHEBI:30616"/>
        <dbReference type="ChEBI" id="CHEBI:57566"/>
        <dbReference type="ChEBI" id="CHEBI:58593"/>
        <dbReference type="ChEBI" id="CHEBI:456216"/>
        <dbReference type="EC" id="2.7.4.25"/>
    </reaction>
</comment>
<comment type="subcellular location">
    <subcellularLocation>
        <location evidence="1">Cytoplasm</location>
    </subcellularLocation>
</comment>
<comment type="similarity">
    <text evidence="1">Belongs to the cytidylate kinase family. Type 1 subfamily.</text>
</comment>